<proteinExistence type="inferred from homology"/>
<dbReference type="EC" id="3.6.5.-" evidence="1"/>
<dbReference type="EMBL" id="AE016819">
    <property type="protein sequence ID" value="AAS53812.1"/>
    <property type="molecule type" value="Genomic_DNA"/>
</dbReference>
<dbReference type="RefSeq" id="NP_985988.1">
    <property type="nucleotide sequence ID" value="NM_211343.1"/>
</dbReference>
<dbReference type="SMR" id="Q752Y2"/>
<dbReference type="FunCoup" id="Q752Y2">
    <property type="interactions" value="1353"/>
</dbReference>
<dbReference type="STRING" id="284811.Q752Y2"/>
<dbReference type="EnsemblFungi" id="AAS53812">
    <property type="protein sequence ID" value="AAS53812"/>
    <property type="gene ID" value="AGOS_AFR441C"/>
</dbReference>
<dbReference type="GeneID" id="4622265"/>
<dbReference type="KEGG" id="ago:AGOS_AFR441C"/>
<dbReference type="eggNOG" id="KOG1376">
    <property type="taxonomic scope" value="Eukaryota"/>
</dbReference>
<dbReference type="HOGENOM" id="CLU_015718_0_0_1"/>
<dbReference type="InParanoid" id="Q752Y2"/>
<dbReference type="OMA" id="ESCYDIC"/>
<dbReference type="OrthoDB" id="1662883at2759"/>
<dbReference type="Proteomes" id="UP000000591">
    <property type="component" value="Chromosome VI"/>
</dbReference>
<dbReference type="GO" id="GO:0005737">
    <property type="term" value="C:cytoplasm"/>
    <property type="evidence" value="ECO:0000318"/>
    <property type="project" value="GO_Central"/>
</dbReference>
<dbReference type="GO" id="GO:0005874">
    <property type="term" value="C:microtubule"/>
    <property type="evidence" value="ECO:0000318"/>
    <property type="project" value="GO_Central"/>
</dbReference>
<dbReference type="GO" id="GO:0005634">
    <property type="term" value="C:nucleus"/>
    <property type="evidence" value="ECO:0000318"/>
    <property type="project" value="GO_Central"/>
</dbReference>
<dbReference type="GO" id="GO:0005819">
    <property type="term" value="C:spindle"/>
    <property type="evidence" value="ECO:0000318"/>
    <property type="project" value="GO_Central"/>
</dbReference>
<dbReference type="GO" id="GO:0005525">
    <property type="term" value="F:GTP binding"/>
    <property type="evidence" value="ECO:0000318"/>
    <property type="project" value="GO_Central"/>
</dbReference>
<dbReference type="GO" id="GO:0016787">
    <property type="term" value="F:hydrolase activity"/>
    <property type="evidence" value="ECO:0007669"/>
    <property type="project" value="UniProtKB-KW"/>
</dbReference>
<dbReference type="GO" id="GO:0046872">
    <property type="term" value="F:metal ion binding"/>
    <property type="evidence" value="ECO:0007669"/>
    <property type="project" value="UniProtKB-KW"/>
</dbReference>
<dbReference type="GO" id="GO:0005200">
    <property type="term" value="F:structural constituent of cytoskeleton"/>
    <property type="evidence" value="ECO:0000318"/>
    <property type="project" value="GO_Central"/>
</dbReference>
<dbReference type="GO" id="GO:0000226">
    <property type="term" value="P:microtubule cytoskeleton organization"/>
    <property type="evidence" value="ECO:0000318"/>
    <property type="project" value="GO_Central"/>
</dbReference>
<dbReference type="GO" id="GO:0000278">
    <property type="term" value="P:mitotic cell cycle"/>
    <property type="evidence" value="ECO:0000318"/>
    <property type="project" value="GO_Central"/>
</dbReference>
<dbReference type="GO" id="GO:0000280">
    <property type="term" value="P:nuclear division"/>
    <property type="evidence" value="ECO:0000318"/>
    <property type="project" value="GO_Central"/>
</dbReference>
<dbReference type="GO" id="GO:0098863">
    <property type="term" value="P:nuclear migration by microtubule mediated pushing forces"/>
    <property type="evidence" value="ECO:0000318"/>
    <property type="project" value="GO_Central"/>
</dbReference>
<dbReference type="CDD" id="cd02186">
    <property type="entry name" value="alpha_tubulin"/>
    <property type="match status" value="1"/>
</dbReference>
<dbReference type="FunFam" id="1.10.287.600:FF:000005">
    <property type="entry name" value="Tubulin alpha chain"/>
    <property type="match status" value="1"/>
</dbReference>
<dbReference type="FunFam" id="3.30.1330.20:FF:000001">
    <property type="entry name" value="Tubulin alpha chain"/>
    <property type="match status" value="1"/>
</dbReference>
<dbReference type="FunFam" id="3.40.50.1440:FF:000008">
    <property type="entry name" value="Tubulin alpha chain"/>
    <property type="match status" value="1"/>
</dbReference>
<dbReference type="Gene3D" id="1.10.287.600">
    <property type="entry name" value="Helix hairpin bin"/>
    <property type="match status" value="1"/>
</dbReference>
<dbReference type="Gene3D" id="3.30.1330.20">
    <property type="entry name" value="Tubulin/FtsZ, C-terminal domain"/>
    <property type="match status" value="1"/>
</dbReference>
<dbReference type="Gene3D" id="3.40.50.1440">
    <property type="entry name" value="Tubulin/FtsZ, GTPase domain"/>
    <property type="match status" value="1"/>
</dbReference>
<dbReference type="InterPro" id="IPR002452">
    <property type="entry name" value="Alpha_tubulin"/>
</dbReference>
<dbReference type="InterPro" id="IPR008280">
    <property type="entry name" value="Tub_FtsZ_C"/>
</dbReference>
<dbReference type="InterPro" id="IPR000217">
    <property type="entry name" value="Tubulin"/>
</dbReference>
<dbReference type="InterPro" id="IPR037103">
    <property type="entry name" value="Tubulin/FtsZ-like_C"/>
</dbReference>
<dbReference type="InterPro" id="IPR018316">
    <property type="entry name" value="Tubulin/FtsZ_2-layer-sand-dom"/>
</dbReference>
<dbReference type="InterPro" id="IPR036525">
    <property type="entry name" value="Tubulin/FtsZ_GTPase_sf"/>
</dbReference>
<dbReference type="InterPro" id="IPR023123">
    <property type="entry name" value="Tubulin_C"/>
</dbReference>
<dbReference type="InterPro" id="IPR017975">
    <property type="entry name" value="Tubulin_CS"/>
</dbReference>
<dbReference type="InterPro" id="IPR003008">
    <property type="entry name" value="Tubulin_FtsZ_GTPase"/>
</dbReference>
<dbReference type="PANTHER" id="PTHR11588">
    <property type="entry name" value="TUBULIN"/>
    <property type="match status" value="1"/>
</dbReference>
<dbReference type="Pfam" id="PF00091">
    <property type="entry name" value="Tubulin"/>
    <property type="match status" value="1"/>
</dbReference>
<dbReference type="Pfam" id="PF03953">
    <property type="entry name" value="Tubulin_C"/>
    <property type="match status" value="1"/>
</dbReference>
<dbReference type="PRINTS" id="PR01162">
    <property type="entry name" value="ALPHATUBULIN"/>
</dbReference>
<dbReference type="PRINTS" id="PR01161">
    <property type="entry name" value="TUBULIN"/>
</dbReference>
<dbReference type="SMART" id="SM00864">
    <property type="entry name" value="Tubulin"/>
    <property type="match status" value="1"/>
</dbReference>
<dbReference type="SMART" id="SM00865">
    <property type="entry name" value="Tubulin_C"/>
    <property type="match status" value="1"/>
</dbReference>
<dbReference type="SUPFAM" id="SSF55307">
    <property type="entry name" value="Tubulin C-terminal domain-like"/>
    <property type="match status" value="1"/>
</dbReference>
<dbReference type="SUPFAM" id="SSF52490">
    <property type="entry name" value="Tubulin nucleotide-binding domain-like"/>
    <property type="match status" value="1"/>
</dbReference>
<dbReference type="PROSITE" id="PS00227">
    <property type="entry name" value="TUBULIN"/>
    <property type="match status" value="1"/>
</dbReference>
<protein>
    <recommendedName>
        <fullName>Tubulin alpha chain</fullName>
        <ecNumber evidence="1">3.6.5.-</ecNumber>
    </recommendedName>
</protein>
<sequence>MREVISVNAVGQAGCQIGNACWELYSLEHGIRPDGYLQEGLTKPKGGEEGFSTFFNETGSGKFVPRAVYVDLEPNVIDEVRTGAYRELFHPEQLISGKEDAANNYARGHYTVGRELLDDILDRIRKISDQCDGLQGFLFTHSLGGGTGSGLGSLLLEQLSIDYGKKSKLEFAVYPAPQVSTSVVEPYNTVLTTHTTLEHADCTFMVDNEAIYEMCKKNLDISRPSFANLNNLIAQVVSSVTASLRFDGSLNVDLNEFQTNLVPYPRIHFPLVSYAPILSKSKAHHESNSVGEITNACFEPGNQMVKCDPRVGKYMATCLLYRGDVVTRDVQTAVAQVKNKKTVQLVDWCPTGFKIGICYEPPTATPNSQLSSVSRAVCMLSNTTAIADAWKRIDRKFDLMYAKRAFVHWYVGEGMEEGEFTEAREDLAALERDYIEVGADSYADEEEF</sequence>
<organism>
    <name type="scientific">Eremothecium gossypii (strain ATCC 10895 / CBS 109.51 / FGSC 9923 / NRRL Y-1056)</name>
    <name type="common">Yeast</name>
    <name type="synonym">Ashbya gossypii</name>
    <dbReference type="NCBI Taxonomy" id="284811"/>
    <lineage>
        <taxon>Eukaryota</taxon>
        <taxon>Fungi</taxon>
        <taxon>Dikarya</taxon>
        <taxon>Ascomycota</taxon>
        <taxon>Saccharomycotina</taxon>
        <taxon>Saccharomycetes</taxon>
        <taxon>Saccharomycetales</taxon>
        <taxon>Saccharomycetaceae</taxon>
        <taxon>Eremothecium</taxon>
    </lineage>
</organism>
<comment type="function">
    <text>Tubulin is the major constituent of microtubules, a cylinder consisting of laterally associated linear protofilaments composed of alpha- and beta-tubulin heterodimers. Microtubules grow by the addition of GTP-tubulin dimers to the microtubule end, where a stabilizing cap forms. Below the cap, tubulin dimers are in GDP-bound state, owing to GTPase activity of alpha-tubulin.</text>
</comment>
<comment type="catalytic activity">
    <reaction evidence="1">
        <text>GTP + H2O = GDP + phosphate + H(+)</text>
        <dbReference type="Rhea" id="RHEA:19669"/>
        <dbReference type="ChEBI" id="CHEBI:15377"/>
        <dbReference type="ChEBI" id="CHEBI:15378"/>
        <dbReference type="ChEBI" id="CHEBI:37565"/>
        <dbReference type="ChEBI" id="CHEBI:43474"/>
        <dbReference type="ChEBI" id="CHEBI:58189"/>
    </reaction>
    <physiologicalReaction direction="left-to-right" evidence="1">
        <dbReference type="Rhea" id="RHEA:19670"/>
    </physiologicalReaction>
</comment>
<comment type="cofactor">
    <cofactor evidence="1">
        <name>Mg(2+)</name>
        <dbReference type="ChEBI" id="CHEBI:18420"/>
    </cofactor>
</comment>
<comment type="subunit">
    <text>Dimer of alpha and beta chains. A typical microtubule is a hollow water-filled tube with an outer diameter of 25 nm and an inner diameter of 15 nM. Alpha-beta heterodimers associate head-to-tail to form protofilaments running lengthwise along the microtubule wall with the beta-tubulin subunit facing the microtubule plus end conferring a structural polarity. Microtubules usually have 13 protofilaments but different protofilament numbers can be found in some organisms and specialized cells.</text>
</comment>
<comment type="subcellular location">
    <subcellularLocation>
        <location>Cytoplasm</location>
        <location>Cytoskeleton</location>
    </subcellularLocation>
</comment>
<comment type="similarity">
    <text evidence="2">Belongs to the tubulin family.</text>
</comment>
<name>TBA_EREGS</name>
<feature type="chain" id="PRO_0000048140" description="Tubulin alpha chain">
    <location>
        <begin position="1"/>
        <end position="448"/>
    </location>
</feature>
<feature type="active site" evidence="1">
    <location>
        <position position="256"/>
    </location>
</feature>
<feature type="binding site" evidence="1">
    <location>
        <position position="12"/>
    </location>
    <ligand>
        <name>GTP</name>
        <dbReference type="ChEBI" id="CHEBI:37565"/>
    </ligand>
</feature>
<feature type="binding site" evidence="1">
    <location>
        <position position="73"/>
    </location>
    <ligand>
        <name>GTP</name>
        <dbReference type="ChEBI" id="CHEBI:37565"/>
    </ligand>
</feature>
<feature type="binding site" evidence="1">
    <location>
        <position position="73"/>
    </location>
    <ligand>
        <name>Mg(2+)</name>
        <dbReference type="ChEBI" id="CHEBI:18420"/>
    </ligand>
</feature>
<feature type="binding site" evidence="1">
    <location>
        <position position="142"/>
    </location>
    <ligand>
        <name>GTP</name>
        <dbReference type="ChEBI" id="CHEBI:37565"/>
    </ligand>
</feature>
<feature type="binding site" evidence="1">
    <location>
        <position position="146"/>
    </location>
    <ligand>
        <name>GTP</name>
        <dbReference type="ChEBI" id="CHEBI:37565"/>
    </ligand>
</feature>
<feature type="binding site" evidence="1">
    <location>
        <position position="147"/>
    </location>
    <ligand>
        <name>GTP</name>
        <dbReference type="ChEBI" id="CHEBI:37565"/>
    </ligand>
</feature>
<feature type="binding site" evidence="1">
    <location>
        <position position="181"/>
    </location>
    <ligand>
        <name>GTP</name>
        <dbReference type="ChEBI" id="CHEBI:37565"/>
    </ligand>
</feature>
<feature type="binding site" evidence="1">
    <location>
        <position position="208"/>
    </location>
    <ligand>
        <name>GTP</name>
        <dbReference type="ChEBI" id="CHEBI:37565"/>
    </ligand>
</feature>
<feature type="binding site" evidence="1">
    <location>
        <position position="230"/>
    </location>
    <ligand>
        <name>GTP</name>
        <dbReference type="ChEBI" id="CHEBI:37565"/>
    </ligand>
</feature>
<gene>
    <name type="primary">TUB1</name>
    <name type="ordered locus">AFR441C</name>
</gene>
<keyword id="KW-0963">Cytoplasm</keyword>
<keyword id="KW-0206">Cytoskeleton</keyword>
<keyword id="KW-0342">GTP-binding</keyword>
<keyword id="KW-0378">Hydrolase</keyword>
<keyword id="KW-0460">Magnesium</keyword>
<keyword id="KW-0479">Metal-binding</keyword>
<keyword id="KW-0493">Microtubule</keyword>
<keyword id="KW-0547">Nucleotide-binding</keyword>
<keyword id="KW-1185">Reference proteome</keyword>
<accession>Q752Y2</accession>
<reference key="1">
    <citation type="journal article" date="2004" name="Science">
        <title>The Ashbya gossypii genome as a tool for mapping the ancient Saccharomyces cerevisiae genome.</title>
        <authorList>
            <person name="Dietrich F.S."/>
            <person name="Voegeli S."/>
            <person name="Brachat S."/>
            <person name="Lerch A."/>
            <person name="Gates K."/>
            <person name="Steiner S."/>
            <person name="Mohr C."/>
            <person name="Poehlmann R."/>
            <person name="Luedi P."/>
            <person name="Choi S."/>
            <person name="Wing R.A."/>
            <person name="Flavier A."/>
            <person name="Gaffney T.D."/>
            <person name="Philippsen P."/>
        </authorList>
    </citation>
    <scope>NUCLEOTIDE SEQUENCE [LARGE SCALE GENOMIC DNA]</scope>
    <source>
        <strain>ATCC 10895 / CBS 109.51 / FGSC 9923 / NRRL Y-1056</strain>
    </source>
</reference>
<reference key="2">
    <citation type="journal article" date="2013" name="G3 (Bethesda)">
        <title>Genomes of Ashbya fungi isolated from insects reveal four mating-type loci, numerous translocations, lack of transposons, and distinct gene duplications.</title>
        <authorList>
            <person name="Dietrich F.S."/>
            <person name="Voegeli S."/>
            <person name="Kuo S."/>
            <person name="Philippsen P."/>
        </authorList>
    </citation>
    <scope>GENOME REANNOTATION</scope>
    <source>
        <strain>ATCC 10895 / CBS 109.51 / FGSC 9923 / NRRL Y-1056</strain>
    </source>
</reference>
<evidence type="ECO:0000250" key="1">
    <source>
        <dbReference type="UniProtKB" id="P68363"/>
    </source>
</evidence>
<evidence type="ECO:0000305" key="2"/>